<proteinExistence type="evidence at protein level"/>
<gene>
    <name evidence="1" type="primary">rplV</name>
    <name type="ordered locus">SAOUHSC_02507</name>
</gene>
<protein>
    <recommendedName>
        <fullName evidence="1">Large ribosomal subunit protein uL22</fullName>
    </recommendedName>
    <alternativeName>
        <fullName evidence="2">50S ribosomal protein L22</fullName>
    </alternativeName>
</protein>
<comment type="function">
    <text evidence="1">This protein binds specifically to 23S rRNA; its binding is stimulated by other ribosomal proteins, e.g. L4, L17, and L20. It is important during the early stages of 50S assembly. It makes multiple contacts with different domains of the 23S rRNA in the assembled 50S subunit and ribosome (By similarity).</text>
</comment>
<comment type="function">
    <text evidence="1">The globular domain of the protein is located near the polypeptide exit tunnel on the outside of the subunit, while an extended beta-hairpin is found that lines the wall of the exit tunnel in the center of the 70S ribosome.</text>
</comment>
<comment type="subunit">
    <text evidence="1">Part of the 50S ribosomal subunit.</text>
</comment>
<comment type="similarity">
    <text evidence="1">Belongs to the universal ribosomal protein uL22 family.</text>
</comment>
<accession>Q2FW11</accession>
<feature type="chain" id="PRO_1000052658" description="Large ribosomal subunit protein uL22">
    <location>
        <begin position="1"/>
        <end position="117"/>
    </location>
</feature>
<feature type="strand" evidence="4">
    <location>
        <begin position="2"/>
        <end position="12"/>
    </location>
</feature>
<feature type="helix" evidence="4">
    <location>
        <begin position="14"/>
        <end position="21"/>
    </location>
</feature>
<feature type="turn" evidence="4">
    <location>
        <begin position="22"/>
        <end position="26"/>
    </location>
</feature>
<feature type="helix" evidence="4">
    <location>
        <begin position="29"/>
        <end position="38"/>
    </location>
</feature>
<feature type="strand" evidence="3">
    <location>
        <begin position="41"/>
        <end position="43"/>
    </location>
</feature>
<feature type="helix" evidence="4">
    <location>
        <begin position="44"/>
        <end position="60"/>
    </location>
</feature>
<feature type="strand" evidence="5">
    <location>
        <begin position="66"/>
        <end position="68"/>
    </location>
</feature>
<feature type="strand" evidence="4">
    <location>
        <begin position="70"/>
        <end position="78"/>
    </location>
</feature>
<feature type="strand" evidence="4">
    <location>
        <begin position="82"/>
        <end position="87"/>
    </location>
</feature>
<feature type="helix" evidence="4">
    <location>
        <begin position="89"/>
        <end position="91"/>
    </location>
</feature>
<feature type="strand" evidence="4">
    <location>
        <begin position="93"/>
        <end position="98"/>
    </location>
</feature>
<feature type="strand" evidence="4">
    <location>
        <begin position="101"/>
        <end position="108"/>
    </location>
</feature>
<evidence type="ECO:0000255" key="1">
    <source>
        <dbReference type="HAMAP-Rule" id="MF_01331"/>
    </source>
</evidence>
<evidence type="ECO:0000305" key="2"/>
<evidence type="ECO:0007829" key="3">
    <source>
        <dbReference type="PDB" id="6DDD"/>
    </source>
</evidence>
<evidence type="ECO:0007829" key="4">
    <source>
        <dbReference type="PDB" id="7ASM"/>
    </source>
</evidence>
<evidence type="ECO:0007829" key="5">
    <source>
        <dbReference type="PDB" id="7ASN"/>
    </source>
</evidence>
<organism>
    <name type="scientific">Staphylococcus aureus (strain NCTC 8325 / PS 47)</name>
    <dbReference type="NCBI Taxonomy" id="93061"/>
    <lineage>
        <taxon>Bacteria</taxon>
        <taxon>Bacillati</taxon>
        <taxon>Bacillota</taxon>
        <taxon>Bacilli</taxon>
        <taxon>Bacillales</taxon>
        <taxon>Staphylococcaceae</taxon>
        <taxon>Staphylococcus</taxon>
    </lineage>
</organism>
<dbReference type="EMBL" id="CP000253">
    <property type="protein sequence ID" value="ABD31525.1"/>
    <property type="molecule type" value="Genomic_DNA"/>
</dbReference>
<dbReference type="RefSeq" id="WP_000387527.1">
    <property type="nucleotide sequence ID" value="NZ_LS483365.1"/>
</dbReference>
<dbReference type="RefSeq" id="YP_500974.1">
    <property type="nucleotide sequence ID" value="NC_007795.1"/>
</dbReference>
<dbReference type="PDB" id="4WCE">
    <property type="method" value="X-ray"/>
    <property type="resolution" value="3.53 A"/>
    <property type="chains" value="P=1-117"/>
</dbReference>
<dbReference type="PDB" id="4WF9">
    <property type="method" value="X-ray"/>
    <property type="resolution" value="3.43 A"/>
    <property type="chains" value="P=1-117"/>
</dbReference>
<dbReference type="PDB" id="4WFA">
    <property type="method" value="X-ray"/>
    <property type="resolution" value="3.39 A"/>
    <property type="chains" value="P=1-117"/>
</dbReference>
<dbReference type="PDB" id="4WFB">
    <property type="method" value="X-ray"/>
    <property type="resolution" value="3.43 A"/>
    <property type="chains" value="P=1-117"/>
</dbReference>
<dbReference type="PDB" id="5HKV">
    <property type="method" value="X-ray"/>
    <property type="resolution" value="3.66 A"/>
    <property type="chains" value="P=1-117"/>
</dbReference>
<dbReference type="PDB" id="5HL7">
    <property type="method" value="X-ray"/>
    <property type="resolution" value="3.55 A"/>
    <property type="chains" value="P=1-117"/>
</dbReference>
<dbReference type="PDB" id="5LI0">
    <property type="method" value="EM"/>
    <property type="resolution" value="3.80 A"/>
    <property type="chains" value="V=1-112"/>
</dbReference>
<dbReference type="PDB" id="5ND8">
    <property type="method" value="EM"/>
    <property type="resolution" value="3.70 A"/>
    <property type="chains" value="V=1-117"/>
</dbReference>
<dbReference type="PDB" id="5ND9">
    <property type="method" value="EM"/>
    <property type="resolution" value="3.70 A"/>
    <property type="chains" value="V=1-117"/>
</dbReference>
<dbReference type="PDB" id="5NRG">
    <property type="method" value="X-ray"/>
    <property type="resolution" value="3.44 A"/>
    <property type="chains" value="P=1-117"/>
</dbReference>
<dbReference type="PDB" id="5TCU">
    <property type="method" value="EM"/>
    <property type="resolution" value="3.90 A"/>
    <property type="chains" value="L5=1-112"/>
</dbReference>
<dbReference type="PDB" id="6DDD">
    <property type="method" value="EM"/>
    <property type="resolution" value="3.10 A"/>
    <property type="chains" value="E=1-116"/>
</dbReference>
<dbReference type="PDB" id="6DDG">
    <property type="method" value="EM"/>
    <property type="resolution" value="3.10 A"/>
    <property type="chains" value="E=1-116"/>
</dbReference>
<dbReference type="PDB" id="6HMA">
    <property type="method" value="EM"/>
    <property type="resolution" value="2.65 A"/>
    <property type="chains" value="Q=1-112"/>
</dbReference>
<dbReference type="PDB" id="6SJ6">
    <property type="method" value="EM"/>
    <property type="resolution" value="3.23 A"/>
    <property type="chains" value="V=1-117"/>
</dbReference>
<dbReference type="PDB" id="6WQN">
    <property type="method" value="EM"/>
    <property type="resolution" value="2.90 A"/>
    <property type="chains" value="E=1-117"/>
</dbReference>
<dbReference type="PDB" id="6WQQ">
    <property type="method" value="EM"/>
    <property type="resolution" value="3.10 A"/>
    <property type="chains" value="E=1-117"/>
</dbReference>
<dbReference type="PDB" id="6WRS">
    <property type="method" value="EM"/>
    <property type="resolution" value="3.20 A"/>
    <property type="chains" value="E=1-117"/>
</dbReference>
<dbReference type="PDB" id="6WRU">
    <property type="method" value="EM"/>
    <property type="resolution" value="3.10 A"/>
    <property type="chains" value="E=1-117"/>
</dbReference>
<dbReference type="PDB" id="6YEF">
    <property type="method" value="EM"/>
    <property type="resolution" value="3.20 A"/>
    <property type="chains" value="V=1-117"/>
</dbReference>
<dbReference type="PDB" id="7ASM">
    <property type="method" value="EM"/>
    <property type="resolution" value="2.48 A"/>
    <property type="chains" value="Q=1-112"/>
</dbReference>
<dbReference type="PDB" id="7ASN">
    <property type="method" value="EM"/>
    <property type="resolution" value="2.73 A"/>
    <property type="chains" value="Q=1-112"/>
</dbReference>
<dbReference type="PDB" id="7NHL">
    <property type="method" value="EM"/>
    <property type="resolution" value="3.10 A"/>
    <property type="chains" value="V=1-117"/>
</dbReference>
<dbReference type="PDB" id="7NHM">
    <property type="method" value="EM"/>
    <property type="resolution" value="3.10 A"/>
    <property type="chains" value="V=1-117"/>
</dbReference>
<dbReference type="PDB" id="7TTU">
    <property type="method" value="EM"/>
    <property type="resolution" value="3.00 A"/>
    <property type="chains" value="E=1-117"/>
</dbReference>
<dbReference type="PDB" id="7TTW">
    <property type="method" value="EM"/>
    <property type="resolution" value="2.90 A"/>
    <property type="chains" value="E=1-117"/>
</dbReference>
<dbReference type="PDB" id="8P2F">
    <property type="method" value="EM"/>
    <property type="resolution" value="2.44 A"/>
    <property type="chains" value="V=1-117"/>
</dbReference>
<dbReference type="PDB" id="8P2G">
    <property type="method" value="EM"/>
    <property type="resolution" value="2.02 A"/>
    <property type="chains" value="V=1-117"/>
</dbReference>
<dbReference type="PDB" id="8P2H">
    <property type="method" value="EM"/>
    <property type="resolution" value="2.49 A"/>
    <property type="chains" value="V=1-117"/>
</dbReference>
<dbReference type="PDBsum" id="4WCE"/>
<dbReference type="PDBsum" id="4WF9"/>
<dbReference type="PDBsum" id="4WFA"/>
<dbReference type="PDBsum" id="4WFB"/>
<dbReference type="PDBsum" id="5HKV"/>
<dbReference type="PDBsum" id="5HL7"/>
<dbReference type="PDBsum" id="5LI0"/>
<dbReference type="PDBsum" id="5ND8"/>
<dbReference type="PDBsum" id="5ND9"/>
<dbReference type="PDBsum" id="5NRG"/>
<dbReference type="PDBsum" id="5TCU"/>
<dbReference type="PDBsum" id="6DDD"/>
<dbReference type="PDBsum" id="6DDG"/>
<dbReference type="PDBsum" id="6HMA"/>
<dbReference type="PDBsum" id="6SJ6"/>
<dbReference type="PDBsum" id="6WQN"/>
<dbReference type="PDBsum" id="6WQQ"/>
<dbReference type="PDBsum" id="6WRS"/>
<dbReference type="PDBsum" id="6WRU"/>
<dbReference type="PDBsum" id="6YEF"/>
<dbReference type="PDBsum" id="7ASM"/>
<dbReference type="PDBsum" id="7ASN"/>
<dbReference type="PDBsum" id="7NHL"/>
<dbReference type="PDBsum" id="7NHM"/>
<dbReference type="PDBsum" id="7TTU"/>
<dbReference type="PDBsum" id="7TTW"/>
<dbReference type="PDBsum" id="8P2F"/>
<dbReference type="PDBsum" id="8P2G"/>
<dbReference type="PDBsum" id="8P2H"/>
<dbReference type="EMDB" id="EMD-10212"/>
<dbReference type="EMDB" id="EMD-10791"/>
<dbReference type="EMDB" id="EMD-12332"/>
<dbReference type="EMDB" id="EMD-12333"/>
<dbReference type="EMDB" id="EMD-17363"/>
<dbReference type="EMDB" id="EMD-17364"/>
<dbReference type="EMDB" id="EMD-17365"/>
<dbReference type="EMDB" id="EMD-3624"/>
<dbReference type="EMDB" id="EMD-3625"/>
<dbReference type="EMDB" id="EMD-4050"/>
<dbReference type="EMDB" id="EMD-8402"/>
<dbReference type="SMR" id="Q2FW11"/>
<dbReference type="IntAct" id="Q2FW11">
    <property type="interactions" value="1"/>
</dbReference>
<dbReference type="STRING" id="93061.SAOUHSC_02507"/>
<dbReference type="PaxDb" id="1280-SAXN108_2494"/>
<dbReference type="GeneID" id="3920883"/>
<dbReference type="GeneID" id="98346557"/>
<dbReference type="KEGG" id="sao:SAOUHSC_02507"/>
<dbReference type="PATRIC" id="fig|93061.5.peg.2262"/>
<dbReference type="eggNOG" id="COG0091">
    <property type="taxonomic scope" value="Bacteria"/>
</dbReference>
<dbReference type="HOGENOM" id="CLU_083987_3_3_9"/>
<dbReference type="OrthoDB" id="9805969at2"/>
<dbReference type="EvolutionaryTrace" id="Q2FW11"/>
<dbReference type="PRO" id="PR:Q2FW11"/>
<dbReference type="Proteomes" id="UP000008816">
    <property type="component" value="Chromosome"/>
</dbReference>
<dbReference type="GO" id="GO:0022625">
    <property type="term" value="C:cytosolic large ribosomal subunit"/>
    <property type="evidence" value="ECO:0000318"/>
    <property type="project" value="GO_Central"/>
</dbReference>
<dbReference type="GO" id="GO:0019843">
    <property type="term" value="F:rRNA binding"/>
    <property type="evidence" value="ECO:0007669"/>
    <property type="project" value="UniProtKB-UniRule"/>
</dbReference>
<dbReference type="GO" id="GO:0003735">
    <property type="term" value="F:structural constituent of ribosome"/>
    <property type="evidence" value="ECO:0000318"/>
    <property type="project" value="GO_Central"/>
</dbReference>
<dbReference type="GO" id="GO:0006412">
    <property type="term" value="P:translation"/>
    <property type="evidence" value="ECO:0000318"/>
    <property type="project" value="GO_Central"/>
</dbReference>
<dbReference type="CDD" id="cd00336">
    <property type="entry name" value="Ribosomal_L22"/>
    <property type="match status" value="1"/>
</dbReference>
<dbReference type="FunFam" id="3.90.470.10:FF:000001">
    <property type="entry name" value="50S ribosomal protein L22"/>
    <property type="match status" value="1"/>
</dbReference>
<dbReference type="Gene3D" id="3.90.470.10">
    <property type="entry name" value="Ribosomal protein L22/L17"/>
    <property type="match status" value="1"/>
</dbReference>
<dbReference type="HAMAP" id="MF_01331_B">
    <property type="entry name" value="Ribosomal_uL22_B"/>
    <property type="match status" value="1"/>
</dbReference>
<dbReference type="InterPro" id="IPR001063">
    <property type="entry name" value="Ribosomal_uL22"/>
</dbReference>
<dbReference type="InterPro" id="IPR005727">
    <property type="entry name" value="Ribosomal_uL22_bac/chlpt-type"/>
</dbReference>
<dbReference type="InterPro" id="IPR047867">
    <property type="entry name" value="Ribosomal_uL22_bac/org-type"/>
</dbReference>
<dbReference type="InterPro" id="IPR018260">
    <property type="entry name" value="Ribosomal_uL22_CS"/>
</dbReference>
<dbReference type="InterPro" id="IPR036394">
    <property type="entry name" value="Ribosomal_uL22_sf"/>
</dbReference>
<dbReference type="NCBIfam" id="TIGR01044">
    <property type="entry name" value="rplV_bact"/>
    <property type="match status" value="1"/>
</dbReference>
<dbReference type="PANTHER" id="PTHR13501">
    <property type="entry name" value="CHLOROPLAST 50S RIBOSOMAL PROTEIN L22-RELATED"/>
    <property type="match status" value="1"/>
</dbReference>
<dbReference type="PANTHER" id="PTHR13501:SF8">
    <property type="entry name" value="LARGE RIBOSOMAL SUBUNIT PROTEIN UL22M"/>
    <property type="match status" value="1"/>
</dbReference>
<dbReference type="Pfam" id="PF00237">
    <property type="entry name" value="Ribosomal_L22"/>
    <property type="match status" value="1"/>
</dbReference>
<dbReference type="SUPFAM" id="SSF54843">
    <property type="entry name" value="Ribosomal protein L22"/>
    <property type="match status" value="1"/>
</dbReference>
<dbReference type="PROSITE" id="PS00464">
    <property type="entry name" value="RIBOSOMAL_L22"/>
    <property type="match status" value="1"/>
</dbReference>
<sequence length="117" mass="12835">MEAKAVARTIRIAPRKVRLVLDLIRGKNAAEAIAILKLTNKASSPVIEKVLMSALANAEHNYDMNTDELVVKEAYANEGPTLKRFRPRAQGRASAINKRTSHITIVVSDGKEEAKEA</sequence>
<reference key="1">
    <citation type="book" date="2006" name="Gram positive pathogens, 2nd edition">
        <title>The Staphylococcus aureus NCTC 8325 genome.</title>
        <editorList>
            <person name="Fischetti V."/>
            <person name="Novick R."/>
            <person name="Ferretti J."/>
            <person name="Portnoy D."/>
            <person name="Rood J."/>
        </editorList>
        <authorList>
            <person name="Gillaspy A.F."/>
            <person name="Worrell V."/>
            <person name="Orvis J."/>
            <person name="Roe B.A."/>
            <person name="Dyer D.W."/>
            <person name="Iandolo J.J."/>
        </authorList>
    </citation>
    <scope>NUCLEOTIDE SEQUENCE [LARGE SCALE GENOMIC DNA]</scope>
    <source>
        <strain>NCTC 8325 / PS 47</strain>
    </source>
</reference>
<name>RL22_STAA8</name>
<keyword id="KW-0002">3D-structure</keyword>
<keyword id="KW-1185">Reference proteome</keyword>
<keyword id="KW-0687">Ribonucleoprotein</keyword>
<keyword id="KW-0689">Ribosomal protein</keyword>
<keyword id="KW-0694">RNA-binding</keyword>
<keyword id="KW-0699">rRNA-binding</keyword>